<feature type="chain" id="PRO_1000092683" description="Imidazoleglycerol-phosphate dehydratase">
    <location>
        <begin position="1"/>
        <end position="200"/>
    </location>
</feature>
<evidence type="ECO:0000255" key="1">
    <source>
        <dbReference type="HAMAP-Rule" id="MF_00076"/>
    </source>
</evidence>
<accession>B3EKC2</accession>
<keyword id="KW-0028">Amino-acid biosynthesis</keyword>
<keyword id="KW-0963">Cytoplasm</keyword>
<keyword id="KW-0368">Histidine biosynthesis</keyword>
<keyword id="KW-0456">Lyase</keyword>
<dbReference type="EC" id="4.2.1.19" evidence="1"/>
<dbReference type="EMBL" id="CP001101">
    <property type="protein sequence ID" value="ACE04549.1"/>
    <property type="molecule type" value="Genomic_DNA"/>
</dbReference>
<dbReference type="SMR" id="B3EKC2"/>
<dbReference type="STRING" id="331678.Cphamn1_1629"/>
<dbReference type="KEGG" id="cpb:Cphamn1_1629"/>
<dbReference type="eggNOG" id="COG0131">
    <property type="taxonomic scope" value="Bacteria"/>
</dbReference>
<dbReference type="HOGENOM" id="CLU_044308_3_0_10"/>
<dbReference type="OrthoDB" id="9790411at2"/>
<dbReference type="UniPathway" id="UPA00031">
    <property type="reaction ID" value="UER00011"/>
</dbReference>
<dbReference type="GO" id="GO:0005737">
    <property type="term" value="C:cytoplasm"/>
    <property type="evidence" value="ECO:0007669"/>
    <property type="project" value="UniProtKB-SubCell"/>
</dbReference>
<dbReference type="GO" id="GO:0004424">
    <property type="term" value="F:imidazoleglycerol-phosphate dehydratase activity"/>
    <property type="evidence" value="ECO:0007669"/>
    <property type="project" value="UniProtKB-UniRule"/>
</dbReference>
<dbReference type="GO" id="GO:0000105">
    <property type="term" value="P:L-histidine biosynthetic process"/>
    <property type="evidence" value="ECO:0007669"/>
    <property type="project" value="UniProtKB-UniRule"/>
</dbReference>
<dbReference type="CDD" id="cd07914">
    <property type="entry name" value="IGPD"/>
    <property type="match status" value="1"/>
</dbReference>
<dbReference type="FunFam" id="3.30.230.40:FF:000001">
    <property type="entry name" value="Imidazoleglycerol-phosphate dehydratase HisB"/>
    <property type="match status" value="1"/>
</dbReference>
<dbReference type="FunFam" id="3.30.230.40:FF:000003">
    <property type="entry name" value="Imidazoleglycerol-phosphate dehydratase HisB"/>
    <property type="match status" value="1"/>
</dbReference>
<dbReference type="Gene3D" id="3.30.230.40">
    <property type="entry name" value="Imidazole glycerol phosphate dehydratase, domain 1"/>
    <property type="match status" value="2"/>
</dbReference>
<dbReference type="HAMAP" id="MF_00076">
    <property type="entry name" value="HisB"/>
    <property type="match status" value="1"/>
</dbReference>
<dbReference type="InterPro" id="IPR038494">
    <property type="entry name" value="IGPD_sf"/>
</dbReference>
<dbReference type="InterPro" id="IPR000807">
    <property type="entry name" value="ImidazoleglycerolP_deHydtase"/>
</dbReference>
<dbReference type="InterPro" id="IPR020565">
    <property type="entry name" value="ImidazoleglycerP_deHydtase_CS"/>
</dbReference>
<dbReference type="InterPro" id="IPR020568">
    <property type="entry name" value="Ribosomal_Su5_D2-typ_SF"/>
</dbReference>
<dbReference type="NCBIfam" id="NF002111">
    <property type="entry name" value="PRK00951.2-1"/>
    <property type="match status" value="1"/>
</dbReference>
<dbReference type="NCBIfam" id="NF002114">
    <property type="entry name" value="PRK00951.2-4"/>
    <property type="match status" value="1"/>
</dbReference>
<dbReference type="PANTHER" id="PTHR23133:SF2">
    <property type="entry name" value="IMIDAZOLEGLYCEROL-PHOSPHATE DEHYDRATASE"/>
    <property type="match status" value="1"/>
</dbReference>
<dbReference type="PANTHER" id="PTHR23133">
    <property type="entry name" value="IMIDAZOLEGLYCEROL-PHOSPHATE DEHYDRATASE HIS7"/>
    <property type="match status" value="1"/>
</dbReference>
<dbReference type="Pfam" id="PF00475">
    <property type="entry name" value="IGPD"/>
    <property type="match status" value="1"/>
</dbReference>
<dbReference type="SUPFAM" id="SSF54211">
    <property type="entry name" value="Ribosomal protein S5 domain 2-like"/>
    <property type="match status" value="2"/>
</dbReference>
<dbReference type="PROSITE" id="PS00954">
    <property type="entry name" value="IGP_DEHYDRATASE_1"/>
    <property type="match status" value="1"/>
</dbReference>
<dbReference type="PROSITE" id="PS00955">
    <property type="entry name" value="IGP_DEHYDRATASE_2"/>
    <property type="match status" value="1"/>
</dbReference>
<gene>
    <name evidence="1" type="primary">hisB</name>
    <name type="ordered locus">Cphamn1_1629</name>
</gene>
<proteinExistence type="inferred from homology"/>
<organism>
    <name type="scientific">Chlorobium phaeobacteroides (strain BS1)</name>
    <dbReference type="NCBI Taxonomy" id="331678"/>
    <lineage>
        <taxon>Bacteria</taxon>
        <taxon>Pseudomonadati</taxon>
        <taxon>Chlorobiota</taxon>
        <taxon>Chlorobiia</taxon>
        <taxon>Chlorobiales</taxon>
        <taxon>Chlorobiaceae</taxon>
        <taxon>Chlorobium/Pelodictyon group</taxon>
        <taxon>Chlorobium</taxon>
    </lineage>
</organism>
<sequence>MPQKKHNRVRSAKVLRKTSETDISVEVDLDGSGSSTVDSGVTFLDHMLTNFSKHSGIDIALRCKGDTGIDDHHSVEDIAIVMGSAILEALGDKKGIHRYGWAIIPMDEALARCSLDLGGRSYCVFHAPFSRAEINGFSTEMVEHFFVSLSRTLQANLHLRVLEGSNTHHKIEALFKAFAYAMKQAVHIIGTDIPSTKGMI</sequence>
<comment type="catalytic activity">
    <reaction evidence="1">
        <text>D-erythro-1-(imidazol-4-yl)glycerol 3-phosphate = 3-(imidazol-4-yl)-2-oxopropyl phosphate + H2O</text>
        <dbReference type="Rhea" id="RHEA:11040"/>
        <dbReference type="ChEBI" id="CHEBI:15377"/>
        <dbReference type="ChEBI" id="CHEBI:57766"/>
        <dbReference type="ChEBI" id="CHEBI:58278"/>
        <dbReference type="EC" id="4.2.1.19"/>
    </reaction>
</comment>
<comment type="pathway">
    <text evidence="1">Amino-acid biosynthesis; L-histidine biosynthesis; L-histidine from 5-phospho-alpha-D-ribose 1-diphosphate: step 6/9.</text>
</comment>
<comment type="subcellular location">
    <subcellularLocation>
        <location evidence="1">Cytoplasm</location>
    </subcellularLocation>
</comment>
<comment type="similarity">
    <text evidence="1">Belongs to the imidazoleglycerol-phosphate dehydratase family.</text>
</comment>
<reference key="1">
    <citation type="submission" date="2008-06" db="EMBL/GenBank/DDBJ databases">
        <title>Complete sequence of Chlorobium phaeobacteroides BS1.</title>
        <authorList>
            <consortium name="US DOE Joint Genome Institute"/>
            <person name="Lucas S."/>
            <person name="Copeland A."/>
            <person name="Lapidus A."/>
            <person name="Glavina del Rio T."/>
            <person name="Dalin E."/>
            <person name="Tice H."/>
            <person name="Bruce D."/>
            <person name="Goodwin L."/>
            <person name="Pitluck S."/>
            <person name="Schmutz J."/>
            <person name="Larimer F."/>
            <person name="Land M."/>
            <person name="Hauser L."/>
            <person name="Kyrpides N."/>
            <person name="Ovchinnikova G."/>
            <person name="Li T."/>
            <person name="Liu Z."/>
            <person name="Zhao F."/>
            <person name="Overmann J."/>
            <person name="Bryant D.A."/>
            <person name="Richardson P."/>
        </authorList>
    </citation>
    <scope>NUCLEOTIDE SEQUENCE [LARGE SCALE GENOMIC DNA]</scope>
    <source>
        <strain>BS1</strain>
    </source>
</reference>
<protein>
    <recommendedName>
        <fullName evidence="1">Imidazoleglycerol-phosphate dehydratase</fullName>
        <shortName evidence="1">IGPD</shortName>
        <ecNumber evidence="1">4.2.1.19</ecNumber>
    </recommendedName>
</protein>
<name>HIS7_CHLPB</name>